<name>GSA_NOCFA</name>
<evidence type="ECO:0000255" key="1">
    <source>
        <dbReference type="HAMAP-Rule" id="MF_00375"/>
    </source>
</evidence>
<reference key="1">
    <citation type="journal article" date="2004" name="Proc. Natl. Acad. Sci. U.S.A.">
        <title>The complete genomic sequence of Nocardia farcinica IFM 10152.</title>
        <authorList>
            <person name="Ishikawa J."/>
            <person name="Yamashita A."/>
            <person name="Mikami Y."/>
            <person name="Hoshino Y."/>
            <person name="Kurita H."/>
            <person name="Hotta K."/>
            <person name="Shiba T."/>
            <person name="Hattori M."/>
        </authorList>
    </citation>
    <scope>NUCLEOTIDE SEQUENCE [LARGE SCALE GENOMIC DNA]</scope>
    <source>
        <strain>IFM 10152</strain>
    </source>
</reference>
<accession>Q5YP79</accession>
<dbReference type="EC" id="5.4.3.8" evidence="1"/>
<dbReference type="EMBL" id="AP006618">
    <property type="protein sequence ID" value="BAD60012.1"/>
    <property type="molecule type" value="Genomic_DNA"/>
</dbReference>
<dbReference type="RefSeq" id="WP_011211694.1">
    <property type="nucleotide sequence ID" value="NC_006361.1"/>
</dbReference>
<dbReference type="SMR" id="Q5YP79"/>
<dbReference type="STRING" id="247156.NFA_51600"/>
<dbReference type="GeneID" id="61135738"/>
<dbReference type="KEGG" id="nfa:NFA_51600"/>
<dbReference type="eggNOG" id="COG0001">
    <property type="taxonomic scope" value="Bacteria"/>
</dbReference>
<dbReference type="HOGENOM" id="CLU_016922_1_5_11"/>
<dbReference type="OrthoDB" id="9801052at2"/>
<dbReference type="UniPathway" id="UPA00251">
    <property type="reaction ID" value="UER00317"/>
</dbReference>
<dbReference type="Proteomes" id="UP000006820">
    <property type="component" value="Chromosome"/>
</dbReference>
<dbReference type="GO" id="GO:0005737">
    <property type="term" value="C:cytoplasm"/>
    <property type="evidence" value="ECO:0007669"/>
    <property type="project" value="UniProtKB-SubCell"/>
</dbReference>
<dbReference type="GO" id="GO:0042286">
    <property type="term" value="F:glutamate-1-semialdehyde 2,1-aminomutase activity"/>
    <property type="evidence" value="ECO:0007669"/>
    <property type="project" value="UniProtKB-UniRule"/>
</dbReference>
<dbReference type="GO" id="GO:0030170">
    <property type="term" value="F:pyridoxal phosphate binding"/>
    <property type="evidence" value="ECO:0007669"/>
    <property type="project" value="InterPro"/>
</dbReference>
<dbReference type="GO" id="GO:0008483">
    <property type="term" value="F:transaminase activity"/>
    <property type="evidence" value="ECO:0007669"/>
    <property type="project" value="InterPro"/>
</dbReference>
<dbReference type="GO" id="GO:0006782">
    <property type="term" value="P:protoporphyrinogen IX biosynthetic process"/>
    <property type="evidence" value="ECO:0007669"/>
    <property type="project" value="UniProtKB-UniRule"/>
</dbReference>
<dbReference type="CDD" id="cd00610">
    <property type="entry name" value="OAT_like"/>
    <property type="match status" value="1"/>
</dbReference>
<dbReference type="FunFam" id="3.40.640.10:FF:000021">
    <property type="entry name" value="Glutamate-1-semialdehyde 2,1-aminomutase"/>
    <property type="match status" value="1"/>
</dbReference>
<dbReference type="Gene3D" id="3.90.1150.10">
    <property type="entry name" value="Aspartate Aminotransferase, domain 1"/>
    <property type="match status" value="1"/>
</dbReference>
<dbReference type="Gene3D" id="3.40.640.10">
    <property type="entry name" value="Type I PLP-dependent aspartate aminotransferase-like (Major domain)"/>
    <property type="match status" value="1"/>
</dbReference>
<dbReference type="HAMAP" id="MF_00375">
    <property type="entry name" value="HemL_aminotrans_3"/>
    <property type="match status" value="1"/>
</dbReference>
<dbReference type="InterPro" id="IPR004639">
    <property type="entry name" value="4pyrrol_synth_GluAld_NH2Trfase"/>
</dbReference>
<dbReference type="InterPro" id="IPR005814">
    <property type="entry name" value="Aminotrans_3"/>
</dbReference>
<dbReference type="InterPro" id="IPR049704">
    <property type="entry name" value="Aminotrans_3_PPA_site"/>
</dbReference>
<dbReference type="InterPro" id="IPR015424">
    <property type="entry name" value="PyrdxlP-dep_Trfase"/>
</dbReference>
<dbReference type="InterPro" id="IPR015421">
    <property type="entry name" value="PyrdxlP-dep_Trfase_major"/>
</dbReference>
<dbReference type="InterPro" id="IPR015422">
    <property type="entry name" value="PyrdxlP-dep_Trfase_small"/>
</dbReference>
<dbReference type="NCBIfam" id="TIGR00713">
    <property type="entry name" value="hemL"/>
    <property type="match status" value="1"/>
</dbReference>
<dbReference type="NCBIfam" id="NF000818">
    <property type="entry name" value="PRK00062.1"/>
    <property type="match status" value="1"/>
</dbReference>
<dbReference type="PANTHER" id="PTHR43713">
    <property type="entry name" value="GLUTAMATE-1-SEMIALDEHYDE 2,1-AMINOMUTASE"/>
    <property type="match status" value="1"/>
</dbReference>
<dbReference type="PANTHER" id="PTHR43713:SF3">
    <property type="entry name" value="GLUTAMATE-1-SEMIALDEHYDE 2,1-AMINOMUTASE 1, CHLOROPLASTIC-RELATED"/>
    <property type="match status" value="1"/>
</dbReference>
<dbReference type="Pfam" id="PF00202">
    <property type="entry name" value="Aminotran_3"/>
    <property type="match status" value="1"/>
</dbReference>
<dbReference type="SUPFAM" id="SSF53383">
    <property type="entry name" value="PLP-dependent transferases"/>
    <property type="match status" value="1"/>
</dbReference>
<dbReference type="PROSITE" id="PS00600">
    <property type="entry name" value="AA_TRANSFER_CLASS_3"/>
    <property type="match status" value="1"/>
</dbReference>
<comment type="catalytic activity">
    <reaction evidence="1">
        <text>(S)-4-amino-5-oxopentanoate = 5-aminolevulinate</text>
        <dbReference type="Rhea" id="RHEA:14265"/>
        <dbReference type="ChEBI" id="CHEBI:57501"/>
        <dbReference type="ChEBI" id="CHEBI:356416"/>
        <dbReference type="EC" id="5.4.3.8"/>
    </reaction>
</comment>
<comment type="cofactor">
    <cofactor evidence="1">
        <name>pyridoxal 5'-phosphate</name>
        <dbReference type="ChEBI" id="CHEBI:597326"/>
    </cofactor>
</comment>
<comment type="pathway">
    <text evidence="1">Porphyrin-containing compound metabolism; protoporphyrin-IX biosynthesis; 5-aminolevulinate from L-glutamyl-tRNA(Glu): step 2/2.</text>
</comment>
<comment type="subunit">
    <text evidence="1">Homodimer.</text>
</comment>
<comment type="subcellular location">
    <subcellularLocation>
        <location evidence="1">Cytoplasm</location>
    </subcellularLocation>
</comment>
<comment type="similarity">
    <text evidence="1">Belongs to the class-III pyridoxal-phosphate-dependent aminotransferase family. HemL subfamily.</text>
</comment>
<feature type="chain" id="PRO_0000243590" description="Glutamate-1-semialdehyde 2,1-aminomutase">
    <location>
        <begin position="1"/>
        <end position="445"/>
    </location>
</feature>
<feature type="modified residue" description="N6-(pyridoxal phosphate)lysine" evidence="1">
    <location>
        <position position="276"/>
    </location>
</feature>
<protein>
    <recommendedName>
        <fullName evidence="1">Glutamate-1-semialdehyde 2,1-aminomutase</fullName>
        <shortName evidence="1">GSA</shortName>
        <ecNumber evidence="1">5.4.3.8</ecNumber>
    </recommendedName>
    <alternativeName>
        <fullName evidence="1">Glutamate-1-semialdehyde aminotransferase</fullName>
        <shortName evidence="1">GSA-AT</shortName>
    </alternativeName>
</protein>
<sequence>MSASPRATHASAAASARLFDRAAQVIPGGVNSPVRAFRSVGGTPRFIASADGYTLTDADGNEYVDLVCSWGPMILGHAHPAVVDAVRRAATGGLSFGAPTEAEVELAEHIVARVAPVDRVRLVNSGTEATMSAVRLARGFTGRTKIIKFAGCYHGHVDALLADAGSGVATLGLPTSPGVTGAQAADTIVLPYNDLDAVAAAFEANPGEIACVITEAAAGNMGAVAPLPGFNAGLRELTENHGALLIMDEVMTGFRVSRSGWYGREGVAGDLYTFGKVMSGGLPAAAFGGRAEVMNQLAPLGPVYQAGTLSGNPVAVAAGLATLRAADDAVYAALDRNAERLGGLLTEALTAAGVEHQVQFAGNMVSVFFSDRPVTDYATAKASQTWRFPAFFHALLDGGVYAPPSAFEAWFVSAALDEDAFARIAAALPAAARAAAAATPEGSRA</sequence>
<keyword id="KW-0963">Cytoplasm</keyword>
<keyword id="KW-0413">Isomerase</keyword>
<keyword id="KW-0627">Porphyrin biosynthesis</keyword>
<keyword id="KW-0663">Pyridoxal phosphate</keyword>
<keyword id="KW-1185">Reference proteome</keyword>
<proteinExistence type="inferred from homology"/>
<gene>
    <name evidence="1" type="primary">hemL</name>
    <name type="ordered locus">NFA_51600</name>
</gene>
<organism>
    <name type="scientific">Nocardia farcinica (strain IFM 10152)</name>
    <dbReference type="NCBI Taxonomy" id="247156"/>
    <lineage>
        <taxon>Bacteria</taxon>
        <taxon>Bacillati</taxon>
        <taxon>Actinomycetota</taxon>
        <taxon>Actinomycetes</taxon>
        <taxon>Mycobacteriales</taxon>
        <taxon>Nocardiaceae</taxon>
        <taxon>Nocardia</taxon>
    </lineage>
</organism>